<reference key="1">
    <citation type="journal article" date="2004" name="Proc. Natl. Acad. Sci. U.S.A.">
        <title>Complete genomes of two clinical Staphylococcus aureus strains: evidence for the rapid evolution of virulence and drug resistance.</title>
        <authorList>
            <person name="Holden M.T.G."/>
            <person name="Feil E.J."/>
            <person name="Lindsay J.A."/>
            <person name="Peacock S.J."/>
            <person name="Day N.P.J."/>
            <person name="Enright M.C."/>
            <person name="Foster T.J."/>
            <person name="Moore C.E."/>
            <person name="Hurst L."/>
            <person name="Atkin R."/>
            <person name="Barron A."/>
            <person name="Bason N."/>
            <person name="Bentley S.D."/>
            <person name="Chillingworth C."/>
            <person name="Chillingworth T."/>
            <person name="Churcher C."/>
            <person name="Clark L."/>
            <person name="Corton C."/>
            <person name="Cronin A."/>
            <person name="Doggett J."/>
            <person name="Dowd L."/>
            <person name="Feltwell T."/>
            <person name="Hance Z."/>
            <person name="Harris B."/>
            <person name="Hauser H."/>
            <person name="Holroyd S."/>
            <person name="Jagels K."/>
            <person name="James K.D."/>
            <person name="Lennard N."/>
            <person name="Line A."/>
            <person name="Mayes R."/>
            <person name="Moule S."/>
            <person name="Mungall K."/>
            <person name="Ormond D."/>
            <person name="Quail M.A."/>
            <person name="Rabbinowitsch E."/>
            <person name="Rutherford K.M."/>
            <person name="Sanders M."/>
            <person name="Sharp S."/>
            <person name="Simmonds M."/>
            <person name="Stevens K."/>
            <person name="Whitehead S."/>
            <person name="Barrell B.G."/>
            <person name="Spratt B.G."/>
            <person name="Parkhill J."/>
        </authorList>
    </citation>
    <scope>NUCLEOTIDE SEQUENCE [LARGE SCALE GENOMIC DNA]</scope>
    <source>
        <strain>MSSA476</strain>
    </source>
</reference>
<proteinExistence type="inferred from homology"/>
<evidence type="ECO:0000250" key="1"/>
<evidence type="ECO:0000255" key="2"/>
<evidence type="ECO:0000255" key="3">
    <source>
        <dbReference type="PROSITE-ProRule" id="PRU01118"/>
    </source>
</evidence>
<evidence type="ECO:0000256" key="4">
    <source>
        <dbReference type="SAM" id="MobiDB-lite"/>
    </source>
</evidence>
<comment type="function">
    <text evidence="1">Promotes binding of soluble elastin peptides and tropoelastin to S.aureus cells although it is not able to promote bacterial adherence to immobilized elastin and, therefore, is not a microbial surface component recognizing adhesive matrix molecule (MSCRAMM).</text>
</comment>
<comment type="subcellular location">
    <subcellularLocation>
        <location evidence="1">Cell membrane</location>
        <topology evidence="1">Multi-pass membrane protein</topology>
    </subcellularLocation>
</comment>
<comment type="domain">
    <text evidence="1">The elastin-binding domain is located between residues 13-33 at the surface-exposed N-terminus, whereas the C-terminus, containing the LysM peptidoglycan-binding domain, is not exposed on the surface of intact cells and presumably remains buried within the peptidoglycan. The presence of the TNSHQD sequence, corresponding to residues 18-23, is essential for EbpS activity but not sufficient, additional flanking amino acids in the amino- or carboxy-terminal are required for elastin recognition (By similarity).</text>
</comment>
<protein>
    <recommendedName>
        <fullName>Elastin-binding protein EbpS</fullName>
    </recommendedName>
</protein>
<dbReference type="EMBL" id="BX571857">
    <property type="protein sequence ID" value="CAG43198.1"/>
    <property type="molecule type" value="Genomic_DNA"/>
</dbReference>
<dbReference type="RefSeq" id="WP_000069296.1">
    <property type="nucleotide sequence ID" value="NC_002953.3"/>
</dbReference>
<dbReference type="SMR" id="Q6G983"/>
<dbReference type="KEGG" id="sas:SAS1421"/>
<dbReference type="HOGENOM" id="CLU_043950_0_0_9"/>
<dbReference type="PRO" id="PR:Q6G983"/>
<dbReference type="GO" id="GO:0005886">
    <property type="term" value="C:plasma membrane"/>
    <property type="evidence" value="ECO:0007669"/>
    <property type="project" value="UniProtKB-SubCell"/>
</dbReference>
<dbReference type="CDD" id="cd00118">
    <property type="entry name" value="LysM"/>
    <property type="match status" value="1"/>
</dbReference>
<dbReference type="Gene3D" id="3.10.350.10">
    <property type="entry name" value="LysM domain"/>
    <property type="match status" value="1"/>
</dbReference>
<dbReference type="InterPro" id="IPR018392">
    <property type="entry name" value="LysM_dom"/>
</dbReference>
<dbReference type="InterPro" id="IPR036779">
    <property type="entry name" value="LysM_dom_sf"/>
</dbReference>
<dbReference type="NCBIfam" id="NF033598">
    <property type="entry name" value="elast_bind_EbpS"/>
    <property type="match status" value="1"/>
</dbReference>
<dbReference type="Pfam" id="PF01476">
    <property type="entry name" value="LysM"/>
    <property type="match status" value="1"/>
</dbReference>
<dbReference type="SMART" id="SM00257">
    <property type="entry name" value="LysM"/>
    <property type="match status" value="1"/>
</dbReference>
<dbReference type="SUPFAM" id="SSF54106">
    <property type="entry name" value="LysM domain"/>
    <property type="match status" value="1"/>
</dbReference>
<dbReference type="PROSITE" id="PS51782">
    <property type="entry name" value="LYSM"/>
    <property type="match status" value="1"/>
</dbReference>
<keyword id="KW-1003">Cell membrane</keyword>
<keyword id="KW-0472">Membrane</keyword>
<keyword id="KW-0812">Transmembrane</keyword>
<keyword id="KW-1133">Transmembrane helix</keyword>
<gene>
    <name type="primary">ebpS</name>
    <name type="ordered locus">SAS1421</name>
</gene>
<organism>
    <name type="scientific">Staphylococcus aureus (strain MSSA476)</name>
    <dbReference type="NCBI Taxonomy" id="282459"/>
    <lineage>
        <taxon>Bacteria</taxon>
        <taxon>Bacillati</taxon>
        <taxon>Bacillota</taxon>
        <taxon>Bacilli</taxon>
        <taxon>Bacillales</taxon>
        <taxon>Staphylococcaceae</taxon>
        <taxon>Staphylococcus</taxon>
    </lineage>
</organism>
<feature type="initiator methionine" description="Removed" evidence="1">
    <location>
        <position position="1"/>
    </location>
</feature>
<feature type="chain" id="PRO_0000271735" description="Elastin-binding protein EbpS">
    <location>
        <begin position="2"/>
        <end position="486"/>
    </location>
</feature>
<feature type="topological domain" description="Extracellular" evidence="2">
    <location>
        <begin position="2"/>
        <end position="204"/>
    </location>
</feature>
<feature type="transmembrane region" description="Helical" evidence="2">
    <location>
        <begin position="205"/>
        <end position="225"/>
    </location>
</feature>
<feature type="topological domain" description="Cytoplasmic" evidence="2">
    <location>
        <begin position="226"/>
        <end position="319"/>
    </location>
</feature>
<feature type="transmembrane region" description="Helical" evidence="2">
    <location>
        <begin position="320"/>
        <end position="340"/>
    </location>
</feature>
<feature type="topological domain" description="Extracellular" evidence="2">
    <location>
        <begin position="341"/>
        <end position="486"/>
    </location>
</feature>
<feature type="domain" description="LysM" evidence="3">
    <location>
        <begin position="437"/>
        <end position="485"/>
    </location>
</feature>
<feature type="region of interest" description="Disordered" evidence="4">
    <location>
        <begin position="1"/>
        <end position="314"/>
    </location>
</feature>
<feature type="region of interest" description="Elastin-binding" evidence="1">
    <location>
        <begin position="14"/>
        <end position="34"/>
    </location>
</feature>
<feature type="region of interest" description="Disordered" evidence="4">
    <location>
        <begin position="351"/>
        <end position="440"/>
    </location>
</feature>
<feature type="compositionally biased region" description="Basic and acidic residues" evidence="4">
    <location>
        <begin position="1"/>
        <end position="40"/>
    </location>
</feature>
<feature type="compositionally biased region" description="Polar residues" evidence="4">
    <location>
        <begin position="64"/>
        <end position="85"/>
    </location>
</feature>
<feature type="compositionally biased region" description="Basic and acidic residues" evidence="4">
    <location>
        <begin position="103"/>
        <end position="118"/>
    </location>
</feature>
<feature type="compositionally biased region" description="Basic and acidic residues" evidence="4">
    <location>
        <begin position="126"/>
        <end position="160"/>
    </location>
</feature>
<feature type="compositionally biased region" description="Basic and acidic residues" evidence="4">
    <location>
        <begin position="180"/>
        <end position="199"/>
    </location>
</feature>
<feature type="compositionally biased region" description="Low complexity" evidence="4">
    <location>
        <begin position="204"/>
        <end position="225"/>
    </location>
</feature>
<feature type="compositionally biased region" description="Low complexity" evidence="4">
    <location>
        <begin position="233"/>
        <end position="246"/>
    </location>
</feature>
<feature type="compositionally biased region" description="Basic and acidic residues" evidence="4">
    <location>
        <begin position="247"/>
        <end position="259"/>
    </location>
</feature>
<feature type="compositionally biased region" description="Low complexity" evidence="4">
    <location>
        <begin position="278"/>
        <end position="297"/>
    </location>
</feature>
<feature type="compositionally biased region" description="Basic and acidic residues" evidence="4">
    <location>
        <begin position="299"/>
        <end position="314"/>
    </location>
</feature>
<feature type="compositionally biased region" description="Basic and acidic residues" evidence="4">
    <location>
        <begin position="361"/>
        <end position="398"/>
    </location>
</feature>
<feature type="compositionally biased region" description="Low complexity" evidence="4">
    <location>
        <begin position="403"/>
        <end position="431"/>
    </location>
</feature>
<name>EBPS_STAAS</name>
<accession>Q6G983</accession>
<sequence length="486" mass="53240">MSNNFKDDFEKNRQSIDTNSHQDHTEDVEKDQSELEHQDTIENTEQQFPPRNAQRRKRRRDLATNHNKQVHNESQTSEDNVQNEAGTIDDRQVESSHSTESQEPSHQDSTPQHEEEYYNKNAFAMDKSHPEPIEDNDKHETIKEAENNTEHSTVSDKSEAEQSQQPKPYFATGANQANTSKDKHDDVTVKQDKDESKDHHSGKKGAAIGAGTAGVAGAAGAMGVSKAKKHSNDAQNKSNSDKSNNSTEDKVSQDKSKDHHNGKKGAAIGAGTAGLAGGAASKSASAASKPHASNNASQNHDEHDNHDRDKERKKGGMAKVLLPLIAAVLIIGALAIFGGMALNNHNNGTKENKIANTNKNNADESKDKDTSKDASKDKSKSTDSDKSKEDQDKATKDESDNDQNNANQANNQAQNNQNQQQANQNQQQQQQRQGGGQRHTVNGQENLYRIAIQYYGSGSPENVEKIRRANGLSGNNIRNGQQIVIP</sequence>